<keyword id="KW-0396">Initiation factor</keyword>
<keyword id="KW-0648">Protein biosynthesis</keyword>
<keyword id="KW-1185">Reference proteome</keyword>
<evidence type="ECO:0000255" key="1">
    <source>
        <dbReference type="HAMAP-Rule" id="MF_00232"/>
    </source>
</evidence>
<organism>
    <name type="scientific">Methanococcus maripaludis (strain DSM 14266 / JCM 13030 / NBRC 101832 / S2 / LL)</name>
    <dbReference type="NCBI Taxonomy" id="267377"/>
    <lineage>
        <taxon>Archaea</taxon>
        <taxon>Methanobacteriati</taxon>
        <taxon>Methanobacteriota</taxon>
        <taxon>Methanomada group</taxon>
        <taxon>Methanococci</taxon>
        <taxon>Methanococcales</taxon>
        <taxon>Methanococcaceae</taxon>
        <taxon>Methanococcus</taxon>
    </lineage>
</organism>
<proteinExistence type="inferred from homology"/>
<protein>
    <recommendedName>
        <fullName evidence="1">Translation initiation factor 2 subunit beta</fullName>
    </recommendedName>
    <alternativeName>
        <fullName evidence="1">aIF2-beta</fullName>
    </alternativeName>
    <alternativeName>
        <fullName evidence="1">eIF-2-beta</fullName>
    </alternativeName>
</protein>
<accession>Q6M0H3</accession>
<comment type="function">
    <text evidence="1">eIF-2 functions in the early steps of protein synthesis by forming a ternary complex with GTP and initiator tRNA.</text>
</comment>
<comment type="subunit">
    <text evidence="1">Heterotrimer composed of an alpha, a beta and a gamma chain.</text>
</comment>
<comment type="similarity">
    <text evidence="1">Belongs to the eIF-2-beta/eIF-5 family.</text>
</comment>
<gene>
    <name evidence="1" type="primary">eif2b</name>
    <name type="ordered locus">MMP0297</name>
</gene>
<sequence length="138" mass="15971">MVDYFDYSSLLTRAREQLPEEVFKDVRFEIPSADSFVEGNRTIIKNFKDIAKFMERDPQEFAKYVMKELGTAGDMEGVRLILQGKFGWRMVNEKIQNYVNEYVLCPECGKPDTKIVKEGRIHFLKCTACGAMKPVKTL</sequence>
<reference key="1">
    <citation type="journal article" date="2004" name="J. Bacteriol.">
        <title>Complete genome sequence of the genetically tractable hydrogenotrophic methanogen Methanococcus maripaludis.</title>
        <authorList>
            <person name="Hendrickson E.L."/>
            <person name="Kaul R."/>
            <person name="Zhou Y."/>
            <person name="Bovee D."/>
            <person name="Chapman P."/>
            <person name="Chung J."/>
            <person name="Conway de Macario E."/>
            <person name="Dodsworth J.A."/>
            <person name="Gillett W."/>
            <person name="Graham D.E."/>
            <person name="Hackett M."/>
            <person name="Haydock A.K."/>
            <person name="Kang A."/>
            <person name="Land M.L."/>
            <person name="Levy R."/>
            <person name="Lie T.J."/>
            <person name="Major T.A."/>
            <person name="Moore B.C."/>
            <person name="Porat I."/>
            <person name="Palmeiri A."/>
            <person name="Rouse G."/>
            <person name="Saenphimmachak C."/>
            <person name="Soell D."/>
            <person name="Van Dien S."/>
            <person name="Wang T."/>
            <person name="Whitman W.B."/>
            <person name="Xia Q."/>
            <person name="Zhang Y."/>
            <person name="Larimer F.W."/>
            <person name="Olson M.V."/>
            <person name="Leigh J.A."/>
        </authorList>
    </citation>
    <scope>NUCLEOTIDE SEQUENCE [LARGE SCALE GENOMIC DNA]</scope>
    <source>
        <strain>DSM 14266 / JCM 13030 / NBRC 101832 / S2 / LL</strain>
    </source>
</reference>
<name>IF2B_METMP</name>
<dbReference type="EMBL" id="BX950229">
    <property type="protein sequence ID" value="CAF29853.1"/>
    <property type="molecule type" value="Genomic_DNA"/>
</dbReference>
<dbReference type="RefSeq" id="WP_011170241.1">
    <property type="nucleotide sequence ID" value="NC_005791.1"/>
</dbReference>
<dbReference type="SMR" id="Q6M0H3"/>
<dbReference type="STRING" id="267377.MMP0297"/>
<dbReference type="EnsemblBacteria" id="CAF29853">
    <property type="protein sequence ID" value="CAF29853"/>
    <property type="gene ID" value="MMP0297"/>
</dbReference>
<dbReference type="KEGG" id="mmp:MMP0297"/>
<dbReference type="PATRIC" id="fig|267377.15.peg.300"/>
<dbReference type="eggNOG" id="arCOG01640">
    <property type="taxonomic scope" value="Archaea"/>
</dbReference>
<dbReference type="HOGENOM" id="CLU_026663_3_1_2"/>
<dbReference type="OrthoDB" id="38099at2157"/>
<dbReference type="Proteomes" id="UP000000590">
    <property type="component" value="Chromosome"/>
</dbReference>
<dbReference type="GO" id="GO:0003743">
    <property type="term" value="F:translation initiation factor activity"/>
    <property type="evidence" value="ECO:0007669"/>
    <property type="project" value="UniProtKB-UniRule"/>
</dbReference>
<dbReference type="FunFam" id="3.30.30.170:FF:000001">
    <property type="entry name" value="Eukaryotic translation initiation factor 2 subunit"/>
    <property type="match status" value="1"/>
</dbReference>
<dbReference type="Gene3D" id="3.30.30.170">
    <property type="match status" value="1"/>
</dbReference>
<dbReference type="HAMAP" id="MF_00232">
    <property type="entry name" value="eIF_2_beta"/>
    <property type="match status" value="1"/>
</dbReference>
<dbReference type="InterPro" id="IPR045196">
    <property type="entry name" value="IF2/IF5"/>
</dbReference>
<dbReference type="InterPro" id="IPR004458">
    <property type="entry name" value="TIF2_bsu_arc"/>
</dbReference>
<dbReference type="InterPro" id="IPR002735">
    <property type="entry name" value="Transl_init_fac_IF2/IF5_dom"/>
</dbReference>
<dbReference type="InterPro" id="IPR016189">
    <property type="entry name" value="Transl_init_fac_IF2/IF5_N"/>
</dbReference>
<dbReference type="InterPro" id="IPR016190">
    <property type="entry name" value="Transl_init_fac_IF2/IF5_Zn-bd"/>
</dbReference>
<dbReference type="NCBIfam" id="TIGR00311">
    <property type="entry name" value="aIF-2beta"/>
    <property type="match status" value="1"/>
</dbReference>
<dbReference type="NCBIfam" id="NF003067">
    <property type="entry name" value="PRK03988.1"/>
    <property type="match status" value="1"/>
</dbReference>
<dbReference type="PANTHER" id="PTHR23001">
    <property type="entry name" value="EUKARYOTIC TRANSLATION INITIATION FACTOR"/>
    <property type="match status" value="1"/>
</dbReference>
<dbReference type="PANTHER" id="PTHR23001:SF3">
    <property type="entry name" value="EUKARYOTIC TRANSLATION INITIATION FACTOR 2 SUBUNIT 2"/>
    <property type="match status" value="1"/>
</dbReference>
<dbReference type="Pfam" id="PF01873">
    <property type="entry name" value="eIF-5_eIF-2B"/>
    <property type="match status" value="1"/>
</dbReference>
<dbReference type="SMART" id="SM00653">
    <property type="entry name" value="eIF2B_5"/>
    <property type="match status" value="1"/>
</dbReference>
<dbReference type="SUPFAM" id="SSF100966">
    <property type="entry name" value="Translation initiation factor 2 beta, aIF2beta, N-terminal domain"/>
    <property type="match status" value="1"/>
</dbReference>
<dbReference type="SUPFAM" id="SSF75689">
    <property type="entry name" value="Zinc-binding domain of translation initiation factor 2 beta"/>
    <property type="match status" value="1"/>
</dbReference>
<feature type="chain" id="PRO_0000137424" description="Translation initiation factor 2 subunit beta">
    <location>
        <begin position="1"/>
        <end position="138"/>
    </location>
</feature>